<evidence type="ECO:0000255" key="1">
    <source>
        <dbReference type="HAMAP-Rule" id="MF_00509"/>
    </source>
</evidence>
<evidence type="ECO:0000256" key="2">
    <source>
        <dbReference type="SAM" id="MobiDB-lite"/>
    </source>
</evidence>
<keyword id="KW-0131">Cell cycle</keyword>
<keyword id="KW-0132">Cell division</keyword>
<keyword id="KW-0997">Cell inner membrane</keyword>
<keyword id="KW-1003">Cell membrane</keyword>
<keyword id="KW-0472">Membrane</keyword>
<keyword id="KW-1185">Reference proteome</keyword>
<keyword id="KW-0812">Transmembrane</keyword>
<keyword id="KW-1133">Transmembrane helix</keyword>
<gene>
    <name evidence="1" type="primary">zipA</name>
    <name type="ordered locus">Ecok1_23250</name>
    <name type="ORF">APECO1_4134</name>
</gene>
<reference key="1">
    <citation type="journal article" date="2007" name="J. Bacteriol.">
        <title>The genome sequence of avian pathogenic Escherichia coli strain O1:K1:H7 shares strong similarities with human extraintestinal pathogenic E. coli genomes.</title>
        <authorList>
            <person name="Johnson T.J."/>
            <person name="Kariyawasam S."/>
            <person name="Wannemuehler Y."/>
            <person name="Mangiamele P."/>
            <person name="Johnson S.J."/>
            <person name="Doetkott C."/>
            <person name="Skyberg J.A."/>
            <person name="Lynne A.M."/>
            <person name="Johnson J.R."/>
            <person name="Nolan L.K."/>
        </authorList>
    </citation>
    <scope>NUCLEOTIDE SEQUENCE [LARGE SCALE GENOMIC DNA]</scope>
</reference>
<dbReference type="EMBL" id="CP000468">
    <property type="protein sequence ID" value="ABJ01819.1"/>
    <property type="molecule type" value="Genomic_DNA"/>
</dbReference>
<dbReference type="RefSeq" id="WP_001317975.1">
    <property type="nucleotide sequence ID" value="NZ_CADILS010000039.1"/>
</dbReference>
<dbReference type="BMRB" id="A1ADS9"/>
<dbReference type="SMR" id="A1ADS9"/>
<dbReference type="KEGG" id="ecv:APECO1_4134"/>
<dbReference type="HOGENOM" id="CLU_030174_1_0_6"/>
<dbReference type="Proteomes" id="UP000008216">
    <property type="component" value="Chromosome"/>
</dbReference>
<dbReference type="GO" id="GO:0032153">
    <property type="term" value="C:cell division site"/>
    <property type="evidence" value="ECO:0007669"/>
    <property type="project" value="UniProtKB-UniRule"/>
</dbReference>
<dbReference type="GO" id="GO:0005886">
    <property type="term" value="C:plasma membrane"/>
    <property type="evidence" value="ECO:0007669"/>
    <property type="project" value="UniProtKB-SubCell"/>
</dbReference>
<dbReference type="GO" id="GO:0000917">
    <property type="term" value="P:division septum assembly"/>
    <property type="evidence" value="ECO:0007669"/>
    <property type="project" value="TreeGrafter"/>
</dbReference>
<dbReference type="GO" id="GO:0043093">
    <property type="term" value="P:FtsZ-dependent cytokinesis"/>
    <property type="evidence" value="ECO:0007669"/>
    <property type="project" value="UniProtKB-UniRule"/>
</dbReference>
<dbReference type="CDD" id="cd00231">
    <property type="entry name" value="ZipA"/>
    <property type="match status" value="1"/>
</dbReference>
<dbReference type="FunFam" id="3.30.1400.10:FF:000001">
    <property type="entry name" value="Cell division protein ZipA"/>
    <property type="match status" value="1"/>
</dbReference>
<dbReference type="Gene3D" id="3.30.1400.10">
    <property type="entry name" value="ZipA, C-terminal FtsZ-binding domain"/>
    <property type="match status" value="1"/>
</dbReference>
<dbReference type="HAMAP" id="MF_00509">
    <property type="entry name" value="ZipA"/>
    <property type="match status" value="1"/>
</dbReference>
<dbReference type="InterPro" id="IPR011919">
    <property type="entry name" value="Cell_div_ZipA"/>
</dbReference>
<dbReference type="InterPro" id="IPR007449">
    <property type="entry name" value="ZipA_FtsZ-bd_C"/>
</dbReference>
<dbReference type="InterPro" id="IPR036765">
    <property type="entry name" value="ZipA_FtsZ-bd_C_sf"/>
</dbReference>
<dbReference type="NCBIfam" id="TIGR02205">
    <property type="entry name" value="septum_zipA"/>
    <property type="match status" value="1"/>
</dbReference>
<dbReference type="PANTHER" id="PTHR38685">
    <property type="entry name" value="CELL DIVISION PROTEIN ZIPA"/>
    <property type="match status" value="1"/>
</dbReference>
<dbReference type="PANTHER" id="PTHR38685:SF1">
    <property type="entry name" value="CELL DIVISION PROTEIN ZIPA"/>
    <property type="match status" value="1"/>
</dbReference>
<dbReference type="Pfam" id="PF04354">
    <property type="entry name" value="ZipA_C"/>
    <property type="match status" value="1"/>
</dbReference>
<dbReference type="SMART" id="SM00771">
    <property type="entry name" value="ZipA_C"/>
    <property type="match status" value="1"/>
</dbReference>
<dbReference type="SUPFAM" id="SSF64383">
    <property type="entry name" value="Cell-division protein ZipA, C-terminal domain"/>
    <property type="match status" value="1"/>
</dbReference>
<comment type="function">
    <text evidence="1">Essential cell division protein that stabilizes the FtsZ protofilaments by cross-linking them and that serves as a cytoplasmic membrane anchor for the Z ring. Also required for the recruitment to the septal ring of downstream cell division proteins.</text>
</comment>
<comment type="subunit">
    <text evidence="1">Interacts with FtsZ via their C-terminal domains.</text>
</comment>
<comment type="subcellular location">
    <subcellularLocation>
        <location evidence="1">Cell inner membrane</location>
        <topology evidence="1">Single-pass type I membrane protein</topology>
    </subcellularLocation>
    <text evidence="1">Localizes to the Z ring in an FtsZ-dependent manner.</text>
</comment>
<comment type="similarity">
    <text evidence="1">Belongs to the ZipA family.</text>
</comment>
<protein>
    <recommendedName>
        <fullName evidence="1">Cell division protein ZipA</fullName>
    </recommendedName>
</protein>
<feature type="chain" id="PRO_1000015140" description="Cell division protein ZipA">
    <location>
        <begin position="1"/>
        <end position="332"/>
    </location>
</feature>
<feature type="topological domain" description="Periplasmic" evidence="1">
    <location>
        <begin position="1"/>
        <end position="6"/>
    </location>
</feature>
<feature type="transmembrane region" description="Helical" evidence="1">
    <location>
        <begin position="7"/>
        <end position="27"/>
    </location>
</feature>
<feature type="topological domain" description="Cytoplasmic" evidence="1">
    <location>
        <begin position="28"/>
        <end position="332"/>
    </location>
</feature>
<feature type="region of interest" description="Disordered" evidence="2">
    <location>
        <begin position="42"/>
        <end position="190"/>
    </location>
</feature>
<feature type="compositionally biased region" description="Acidic residues" evidence="2">
    <location>
        <begin position="51"/>
        <end position="63"/>
    </location>
</feature>
<feature type="compositionally biased region" description="Low complexity" evidence="2">
    <location>
        <begin position="99"/>
        <end position="115"/>
    </location>
</feature>
<feature type="compositionally biased region" description="Low complexity" evidence="2">
    <location>
        <begin position="123"/>
        <end position="151"/>
    </location>
</feature>
<feature type="compositionally biased region" description="Low complexity" evidence="2">
    <location>
        <begin position="160"/>
        <end position="175"/>
    </location>
</feature>
<name>ZIPA_ECOK1</name>
<organism>
    <name type="scientific">Escherichia coli O1:K1 / APEC</name>
    <dbReference type="NCBI Taxonomy" id="405955"/>
    <lineage>
        <taxon>Bacteria</taxon>
        <taxon>Pseudomonadati</taxon>
        <taxon>Pseudomonadota</taxon>
        <taxon>Gammaproteobacteria</taxon>
        <taxon>Enterobacterales</taxon>
        <taxon>Enterobacteriaceae</taxon>
        <taxon>Escherichia</taxon>
    </lineage>
</organism>
<sequence length="332" mass="36937">MMQDLRLILIIVGAIAIIALLVHGFWTSRKERSSMFRDRPLKRMKSKRDDDSYDEDVEDDEGVGEVRVHRVNHAPANAQEHEAARPSPQHQYQPPYASAQPRQPVQQPPEAQVPPQHAPRPAQPVQQPVQQPAYQPQPEQPLQQPVSPQVASAPQPVHSAPQPAQQAFQPAEPVAAPQPEPVAEPAPVMDKPKRKEAVIIMNVAAHHGSELNGELLLNSIQQAGFIFGDMNIYHRHLSPDGSGPALFSLANMVKPGTFDPEMKDFTTPGVTIFMQVPSYGDELQNFKLMLQSAQHIADEVGGVVLDDQRRMMTPQKLREYQDIIREVKDANA</sequence>
<proteinExistence type="inferred from homology"/>
<accession>A1ADS9</accession>